<protein>
    <recommendedName>
        <fullName evidence="1">Ribonuclease HII</fullName>
        <shortName evidence="1">RNase HII</shortName>
        <ecNumber evidence="1">3.1.26.4</ecNumber>
    </recommendedName>
</protein>
<gene>
    <name evidence="1" type="primary">rnhB</name>
    <name type="ordered locus">MSC_0430</name>
</gene>
<name>RNH2_MYCMS</name>
<sequence>MISRKSFDDQIKIVHNITYLSGSDEAGRGCLAGPLVVASVILKPDYFNPLIKDSKKLNPKTRQVLYDEIIKNCLDYQIIIISSKQVDELNPLQASLLGFKTTINNLKITPDLALIDGNQNIELTNIKTLQIIKGDDKSFSIACSSILAKVTRDKILDEYDQIYPNYDFKSHKGYCTKKHLLAIQKYGILDIHRKSYKPIKKISKETS</sequence>
<organism>
    <name type="scientific">Mycoplasma mycoides subsp. mycoides SC (strain CCUG 32753 / NCTC 10114 / PG1)</name>
    <dbReference type="NCBI Taxonomy" id="272632"/>
    <lineage>
        <taxon>Bacteria</taxon>
        <taxon>Bacillati</taxon>
        <taxon>Mycoplasmatota</taxon>
        <taxon>Mollicutes</taxon>
        <taxon>Mycoplasmataceae</taxon>
        <taxon>Mycoplasma</taxon>
    </lineage>
</organism>
<feature type="chain" id="PRO_0000235739" description="Ribonuclease HII">
    <location>
        <begin position="1"/>
        <end position="207"/>
    </location>
</feature>
<feature type="domain" description="RNase H type-2" evidence="2">
    <location>
        <begin position="18"/>
        <end position="207"/>
    </location>
</feature>
<feature type="binding site" evidence="1">
    <location>
        <position position="24"/>
    </location>
    <ligand>
        <name>a divalent metal cation</name>
        <dbReference type="ChEBI" id="CHEBI:60240"/>
    </ligand>
</feature>
<feature type="binding site" evidence="1">
    <location>
        <position position="25"/>
    </location>
    <ligand>
        <name>a divalent metal cation</name>
        <dbReference type="ChEBI" id="CHEBI:60240"/>
    </ligand>
</feature>
<feature type="binding site" evidence="1">
    <location>
        <position position="116"/>
    </location>
    <ligand>
        <name>a divalent metal cation</name>
        <dbReference type="ChEBI" id="CHEBI:60240"/>
    </ligand>
</feature>
<dbReference type="EC" id="3.1.26.4" evidence="1"/>
<dbReference type="EMBL" id="BX293980">
    <property type="protein sequence ID" value="CAE77058.1"/>
    <property type="molecule type" value="Genomic_DNA"/>
</dbReference>
<dbReference type="RefSeq" id="NP_975416.1">
    <property type="nucleotide sequence ID" value="NC_005364.2"/>
</dbReference>
<dbReference type="RefSeq" id="WP_011166614.1">
    <property type="nucleotide sequence ID" value="NC_005364.2"/>
</dbReference>
<dbReference type="SMR" id="Q6MTH8"/>
<dbReference type="STRING" id="272632.MSC_0430"/>
<dbReference type="KEGG" id="mmy:MSC_0430"/>
<dbReference type="PATRIC" id="fig|272632.4.peg.468"/>
<dbReference type="eggNOG" id="COG0164">
    <property type="taxonomic scope" value="Bacteria"/>
</dbReference>
<dbReference type="HOGENOM" id="CLU_036532_3_2_14"/>
<dbReference type="Proteomes" id="UP000001016">
    <property type="component" value="Chromosome"/>
</dbReference>
<dbReference type="GO" id="GO:0005737">
    <property type="term" value="C:cytoplasm"/>
    <property type="evidence" value="ECO:0007669"/>
    <property type="project" value="UniProtKB-SubCell"/>
</dbReference>
<dbReference type="GO" id="GO:0032299">
    <property type="term" value="C:ribonuclease H2 complex"/>
    <property type="evidence" value="ECO:0007669"/>
    <property type="project" value="TreeGrafter"/>
</dbReference>
<dbReference type="GO" id="GO:0030145">
    <property type="term" value="F:manganese ion binding"/>
    <property type="evidence" value="ECO:0007669"/>
    <property type="project" value="UniProtKB-UniRule"/>
</dbReference>
<dbReference type="GO" id="GO:0003723">
    <property type="term" value="F:RNA binding"/>
    <property type="evidence" value="ECO:0007669"/>
    <property type="project" value="InterPro"/>
</dbReference>
<dbReference type="GO" id="GO:0004523">
    <property type="term" value="F:RNA-DNA hybrid ribonuclease activity"/>
    <property type="evidence" value="ECO:0007669"/>
    <property type="project" value="UniProtKB-UniRule"/>
</dbReference>
<dbReference type="GO" id="GO:0043137">
    <property type="term" value="P:DNA replication, removal of RNA primer"/>
    <property type="evidence" value="ECO:0007669"/>
    <property type="project" value="TreeGrafter"/>
</dbReference>
<dbReference type="GO" id="GO:0006298">
    <property type="term" value="P:mismatch repair"/>
    <property type="evidence" value="ECO:0007669"/>
    <property type="project" value="TreeGrafter"/>
</dbReference>
<dbReference type="CDD" id="cd07182">
    <property type="entry name" value="RNase_HII_bacteria_HII_like"/>
    <property type="match status" value="1"/>
</dbReference>
<dbReference type="Gene3D" id="3.30.420.10">
    <property type="entry name" value="Ribonuclease H-like superfamily/Ribonuclease H"/>
    <property type="match status" value="1"/>
</dbReference>
<dbReference type="HAMAP" id="MF_00052_B">
    <property type="entry name" value="RNase_HII_B"/>
    <property type="match status" value="1"/>
</dbReference>
<dbReference type="InterPro" id="IPR022898">
    <property type="entry name" value="RNase_HII"/>
</dbReference>
<dbReference type="InterPro" id="IPR001352">
    <property type="entry name" value="RNase_HII/HIII"/>
</dbReference>
<dbReference type="InterPro" id="IPR024567">
    <property type="entry name" value="RNase_HII/HIII_dom"/>
</dbReference>
<dbReference type="InterPro" id="IPR012337">
    <property type="entry name" value="RNaseH-like_sf"/>
</dbReference>
<dbReference type="InterPro" id="IPR036397">
    <property type="entry name" value="RNaseH_sf"/>
</dbReference>
<dbReference type="NCBIfam" id="NF000595">
    <property type="entry name" value="PRK00015.1-3"/>
    <property type="match status" value="1"/>
</dbReference>
<dbReference type="PANTHER" id="PTHR10954">
    <property type="entry name" value="RIBONUCLEASE H2 SUBUNIT A"/>
    <property type="match status" value="1"/>
</dbReference>
<dbReference type="PANTHER" id="PTHR10954:SF18">
    <property type="entry name" value="RIBONUCLEASE HII"/>
    <property type="match status" value="1"/>
</dbReference>
<dbReference type="Pfam" id="PF01351">
    <property type="entry name" value="RNase_HII"/>
    <property type="match status" value="1"/>
</dbReference>
<dbReference type="SUPFAM" id="SSF53098">
    <property type="entry name" value="Ribonuclease H-like"/>
    <property type="match status" value="1"/>
</dbReference>
<dbReference type="PROSITE" id="PS51975">
    <property type="entry name" value="RNASE_H_2"/>
    <property type="match status" value="1"/>
</dbReference>
<proteinExistence type="inferred from homology"/>
<reference key="1">
    <citation type="journal article" date="2004" name="Genome Res.">
        <title>The genome sequence of Mycoplasma mycoides subsp. mycoides SC type strain PG1T, the causative agent of contagious bovine pleuropneumonia (CBPP).</title>
        <authorList>
            <person name="Westberg J."/>
            <person name="Persson A."/>
            <person name="Holmberg A."/>
            <person name="Goesmann A."/>
            <person name="Lundeberg J."/>
            <person name="Johansson K.-E."/>
            <person name="Pettersson B."/>
            <person name="Uhlen M."/>
        </authorList>
    </citation>
    <scope>NUCLEOTIDE SEQUENCE [LARGE SCALE GENOMIC DNA]</scope>
    <source>
        <strain>CCUG 32753 / NCTC 10114 / PG1</strain>
    </source>
</reference>
<comment type="function">
    <text evidence="1">Endonuclease that specifically degrades the RNA of RNA-DNA hybrids.</text>
</comment>
<comment type="catalytic activity">
    <reaction evidence="1">
        <text>Endonucleolytic cleavage to 5'-phosphomonoester.</text>
        <dbReference type="EC" id="3.1.26.4"/>
    </reaction>
</comment>
<comment type="cofactor">
    <cofactor evidence="1">
        <name>Mn(2+)</name>
        <dbReference type="ChEBI" id="CHEBI:29035"/>
    </cofactor>
    <cofactor evidence="1">
        <name>Mg(2+)</name>
        <dbReference type="ChEBI" id="CHEBI:18420"/>
    </cofactor>
    <text evidence="1">Manganese or magnesium. Binds 1 divalent metal ion per monomer in the absence of substrate. May bind a second metal ion after substrate binding.</text>
</comment>
<comment type="subcellular location">
    <subcellularLocation>
        <location evidence="1">Cytoplasm</location>
    </subcellularLocation>
</comment>
<comment type="similarity">
    <text evidence="1">Belongs to the RNase HII family.</text>
</comment>
<evidence type="ECO:0000255" key="1">
    <source>
        <dbReference type="HAMAP-Rule" id="MF_00052"/>
    </source>
</evidence>
<evidence type="ECO:0000255" key="2">
    <source>
        <dbReference type="PROSITE-ProRule" id="PRU01319"/>
    </source>
</evidence>
<accession>Q6MTH8</accession>
<keyword id="KW-0963">Cytoplasm</keyword>
<keyword id="KW-0255">Endonuclease</keyword>
<keyword id="KW-0378">Hydrolase</keyword>
<keyword id="KW-0464">Manganese</keyword>
<keyword id="KW-0479">Metal-binding</keyword>
<keyword id="KW-0540">Nuclease</keyword>
<keyword id="KW-1185">Reference proteome</keyword>